<dbReference type="EMBL" id="L09228">
    <property type="protein sequence ID" value="AAA67476.1"/>
    <property type="molecule type" value="Genomic_DNA"/>
</dbReference>
<dbReference type="EMBL" id="AL009126">
    <property type="protein sequence ID" value="CAB14266.1"/>
    <property type="molecule type" value="Genomic_DNA"/>
</dbReference>
<dbReference type="PIR" id="S45538">
    <property type="entry name" value="S45538"/>
</dbReference>
<dbReference type="RefSeq" id="NP_390215.1">
    <property type="nucleotide sequence ID" value="NC_000964.3"/>
</dbReference>
<dbReference type="RefSeq" id="WP_004398590.1">
    <property type="nucleotide sequence ID" value="NZ_OZ025638.1"/>
</dbReference>
<dbReference type="FunCoup" id="P35151">
    <property type="interactions" value="87"/>
</dbReference>
<dbReference type="STRING" id="224308.BSU23340"/>
<dbReference type="PaxDb" id="224308-BSU23340"/>
<dbReference type="EnsemblBacteria" id="CAB14266">
    <property type="protein sequence ID" value="CAB14266"/>
    <property type="gene ID" value="BSU_23340"/>
</dbReference>
<dbReference type="GeneID" id="938942"/>
<dbReference type="KEGG" id="bsu:BSU23340"/>
<dbReference type="PATRIC" id="fig|224308.179.peg.2540"/>
<dbReference type="InParanoid" id="P35151"/>
<dbReference type="OrthoDB" id="9892948at2"/>
<dbReference type="BioCyc" id="BSUB:BSU23340-MONOMER"/>
<dbReference type="Proteomes" id="UP000001570">
    <property type="component" value="Chromosome"/>
</dbReference>
<organism>
    <name type="scientific">Bacillus subtilis (strain 168)</name>
    <dbReference type="NCBI Taxonomy" id="224308"/>
    <lineage>
        <taxon>Bacteria</taxon>
        <taxon>Bacillati</taxon>
        <taxon>Bacillota</taxon>
        <taxon>Bacilli</taxon>
        <taxon>Bacillales</taxon>
        <taxon>Bacillaceae</taxon>
        <taxon>Bacillus</taxon>
    </lineage>
</organism>
<feature type="chain" id="PRO_0000049727" description="Uncharacterized protein YpuB">
    <location>
        <begin position="1"/>
        <end position="67"/>
    </location>
</feature>
<keyword id="KW-1185">Reference proteome</keyword>
<gene>
    <name type="primary">ypuB</name>
    <name type="ordered locus">BSU23340</name>
</gene>
<name>YPUB_BACSU</name>
<reference key="1">
    <citation type="journal article" date="1993" name="Mol. Microbiol.">
        <title>The organization of the Bacillus subtilis 168 chromosome region between the spoVA and serA genetic loci, based on sequence data.</title>
        <authorList>
            <person name="Sorokin A.V."/>
            <person name="Zumstein E."/>
            <person name="Azevedo V."/>
            <person name="Ehrlich S.D."/>
            <person name="Serror P."/>
        </authorList>
    </citation>
    <scope>NUCLEOTIDE SEQUENCE [GENOMIC DNA]</scope>
    <source>
        <strain>168 / Marburg / ATCC 6051 / DSM 10 / JCM 1465 / NBRC 13719 / NCIMB 3610 / NRRL NRS-744 / VKM B-501</strain>
    </source>
</reference>
<reference key="2">
    <citation type="journal article" date="1997" name="Nature">
        <title>The complete genome sequence of the Gram-positive bacterium Bacillus subtilis.</title>
        <authorList>
            <person name="Kunst F."/>
            <person name="Ogasawara N."/>
            <person name="Moszer I."/>
            <person name="Albertini A.M."/>
            <person name="Alloni G."/>
            <person name="Azevedo V."/>
            <person name="Bertero M.G."/>
            <person name="Bessieres P."/>
            <person name="Bolotin A."/>
            <person name="Borchert S."/>
            <person name="Borriss R."/>
            <person name="Boursier L."/>
            <person name="Brans A."/>
            <person name="Braun M."/>
            <person name="Brignell S.C."/>
            <person name="Bron S."/>
            <person name="Brouillet S."/>
            <person name="Bruschi C.V."/>
            <person name="Caldwell B."/>
            <person name="Capuano V."/>
            <person name="Carter N.M."/>
            <person name="Choi S.-K."/>
            <person name="Codani J.-J."/>
            <person name="Connerton I.F."/>
            <person name="Cummings N.J."/>
            <person name="Daniel R.A."/>
            <person name="Denizot F."/>
            <person name="Devine K.M."/>
            <person name="Duesterhoeft A."/>
            <person name="Ehrlich S.D."/>
            <person name="Emmerson P.T."/>
            <person name="Entian K.-D."/>
            <person name="Errington J."/>
            <person name="Fabret C."/>
            <person name="Ferrari E."/>
            <person name="Foulger D."/>
            <person name="Fritz C."/>
            <person name="Fujita M."/>
            <person name="Fujita Y."/>
            <person name="Fuma S."/>
            <person name="Galizzi A."/>
            <person name="Galleron N."/>
            <person name="Ghim S.-Y."/>
            <person name="Glaser P."/>
            <person name="Goffeau A."/>
            <person name="Golightly E.J."/>
            <person name="Grandi G."/>
            <person name="Guiseppi G."/>
            <person name="Guy B.J."/>
            <person name="Haga K."/>
            <person name="Haiech J."/>
            <person name="Harwood C.R."/>
            <person name="Henaut A."/>
            <person name="Hilbert H."/>
            <person name="Holsappel S."/>
            <person name="Hosono S."/>
            <person name="Hullo M.-F."/>
            <person name="Itaya M."/>
            <person name="Jones L.-M."/>
            <person name="Joris B."/>
            <person name="Karamata D."/>
            <person name="Kasahara Y."/>
            <person name="Klaerr-Blanchard M."/>
            <person name="Klein C."/>
            <person name="Kobayashi Y."/>
            <person name="Koetter P."/>
            <person name="Koningstein G."/>
            <person name="Krogh S."/>
            <person name="Kumano M."/>
            <person name="Kurita K."/>
            <person name="Lapidus A."/>
            <person name="Lardinois S."/>
            <person name="Lauber J."/>
            <person name="Lazarevic V."/>
            <person name="Lee S.-M."/>
            <person name="Levine A."/>
            <person name="Liu H."/>
            <person name="Masuda S."/>
            <person name="Mauel C."/>
            <person name="Medigue C."/>
            <person name="Medina N."/>
            <person name="Mellado R.P."/>
            <person name="Mizuno M."/>
            <person name="Moestl D."/>
            <person name="Nakai S."/>
            <person name="Noback M."/>
            <person name="Noone D."/>
            <person name="O'Reilly M."/>
            <person name="Ogawa K."/>
            <person name="Ogiwara A."/>
            <person name="Oudega B."/>
            <person name="Park S.-H."/>
            <person name="Parro V."/>
            <person name="Pohl T.M."/>
            <person name="Portetelle D."/>
            <person name="Porwollik S."/>
            <person name="Prescott A.M."/>
            <person name="Presecan E."/>
            <person name="Pujic P."/>
            <person name="Purnelle B."/>
            <person name="Rapoport G."/>
            <person name="Rey M."/>
            <person name="Reynolds S."/>
            <person name="Rieger M."/>
            <person name="Rivolta C."/>
            <person name="Rocha E."/>
            <person name="Roche B."/>
            <person name="Rose M."/>
            <person name="Sadaie Y."/>
            <person name="Sato T."/>
            <person name="Scanlan E."/>
            <person name="Schleich S."/>
            <person name="Schroeter R."/>
            <person name="Scoffone F."/>
            <person name="Sekiguchi J."/>
            <person name="Sekowska A."/>
            <person name="Seror S.J."/>
            <person name="Serror P."/>
            <person name="Shin B.-S."/>
            <person name="Soldo B."/>
            <person name="Sorokin A."/>
            <person name="Tacconi E."/>
            <person name="Takagi T."/>
            <person name="Takahashi H."/>
            <person name="Takemaru K."/>
            <person name="Takeuchi M."/>
            <person name="Tamakoshi A."/>
            <person name="Tanaka T."/>
            <person name="Terpstra P."/>
            <person name="Tognoni A."/>
            <person name="Tosato V."/>
            <person name="Uchiyama S."/>
            <person name="Vandenbol M."/>
            <person name="Vannier F."/>
            <person name="Vassarotti A."/>
            <person name="Viari A."/>
            <person name="Wambutt R."/>
            <person name="Wedler E."/>
            <person name="Wedler H."/>
            <person name="Weitzenegger T."/>
            <person name="Winters P."/>
            <person name="Wipat A."/>
            <person name="Yamamoto H."/>
            <person name="Yamane K."/>
            <person name="Yasumoto K."/>
            <person name="Yata K."/>
            <person name="Yoshida K."/>
            <person name="Yoshikawa H.-F."/>
            <person name="Zumstein E."/>
            <person name="Yoshikawa H."/>
            <person name="Danchin A."/>
        </authorList>
    </citation>
    <scope>NUCLEOTIDE SEQUENCE [LARGE SCALE GENOMIC DNA]</scope>
    <source>
        <strain>168</strain>
    </source>
</reference>
<sequence>MQVLTGLLEQYGYAVLFIVLMLELLALLGPGEFAGVLVFQEKLNWVLSMLAAGLGSCGSEHVVLDRV</sequence>
<accession>P35151</accession>
<protein>
    <recommendedName>
        <fullName>Uncharacterized protein YpuB</fullName>
    </recommendedName>
    <alternativeName>
        <fullName>ORFX1</fullName>
    </alternativeName>
</protein>
<proteinExistence type="predicted"/>